<name>DXS_STRC1</name>
<accession>Q9RBN6</accession>
<reference key="1">
    <citation type="journal article" date="2000" name="J. Bacteriol.">
        <title>Cloning and characterization of 1-deoxy-D-xylulose 5-phosphate synthase from Streptomyces sp. strain CL190, which uses both the mevalonate and nonmevalonate pathways for isopentenyl diphosphate biosynthesis.</title>
        <authorList>
            <person name="Kuzuyama T."/>
            <person name="Takagi M."/>
            <person name="Takahashi S."/>
            <person name="Seto H."/>
        </authorList>
    </citation>
    <scope>NUCLEOTIDE SEQUENCE [GENOMIC DNA]</scope>
    <scope>CHARACTERIZATION</scope>
</reference>
<comment type="function">
    <text>Catalyzes the acyloin condensation reaction between C atoms 2 and 3 of pyruvate and glyceraldehyde 3-phosphate to yield 1-deoxy-D-xylulose-5-phosphate (DXP).</text>
</comment>
<comment type="catalytic activity">
    <reaction evidence="1">
        <text>D-glyceraldehyde 3-phosphate + pyruvate + H(+) = 1-deoxy-D-xylulose 5-phosphate + CO2</text>
        <dbReference type="Rhea" id="RHEA:12605"/>
        <dbReference type="ChEBI" id="CHEBI:15361"/>
        <dbReference type="ChEBI" id="CHEBI:15378"/>
        <dbReference type="ChEBI" id="CHEBI:16526"/>
        <dbReference type="ChEBI" id="CHEBI:57792"/>
        <dbReference type="ChEBI" id="CHEBI:59776"/>
        <dbReference type="EC" id="2.2.1.7"/>
    </reaction>
</comment>
<comment type="cofactor">
    <cofactor evidence="1">
        <name>Mg(2+)</name>
        <dbReference type="ChEBI" id="CHEBI:18420"/>
    </cofactor>
    <text evidence="1">Binds 1 Mg(2+) ion per subunit.</text>
</comment>
<comment type="cofactor">
    <cofactor evidence="1">
        <name>thiamine diphosphate</name>
        <dbReference type="ChEBI" id="CHEBI:58937"/>
    </cofactor>
    <text evidence="1">Binds 1 thiamine pyrophosphate per subunit.</text>
</comment>
<comment type="biophysicochemical properties">
    <phDependence>
        <text>Optimum pH is 9.0.</text>
    </phDependence>
    <temperatureDependence>
        <text>Optimum temperature is 42-44 degrees Celsius.</text>
    </temperatureDependence>
</comment>
<comment type="pathway">
    <text evidence="1">Metabolic intermediate biosynthesis; 1-deoxy-D-xylulose 5-phosphate biosynthesis; 1-deoxy-D-xylulose 5-phosphate from D-glyceraldehyde 3-phosphate and pyruvate: step 1/1.</text>
</comment>
<comment type="subunit">
    <text>Homodimer.</text>
</comment>
<comment type="similarity">
    <text evidence="1">Belongs to the transketolase family. DXPS subfamily.</text>
</comment>
<organism>
    <name type="scientific">Streptomyces sp. (strain CL190)</name>
    <dbReference type="NCBI Taxonomy" id="93372"/>
    <lineage>
        <taxon>Bacteria</taxon>
        <taxon>Bacillati</taxon>
        <taxon>Actinomycetota</taxon>
        <taxon>Actinomycetes</taxon>
        <taxon>Kitasatosporales</taxon>
        <taxon>Streptomycetaceae</taxon>
        <taxon>Streptomyces</taxon>
    </lineage>
</organism>
<dbReference type="EC" id="2.2.1.7" evidence="1"/>
<dbReference type="EMBL" id="AB026631">
    <property type="protein sequence ID" value="BAA85847.1"/>
    <property type="molecule type" value="Genomic_DNA"/>
</dbReference>
<dbReference type="SMR" id="Q9RBN6"/>
<dbReference type="KEGG" id="ag:BAA85847"/>
<dbReference type="UniPathway" id="UPA00064">
    <property type="reaction ID" value="UER00091"/>
</dbReference>
<dbReference type="GO" id="GO:0005829">
    <property type="term" value="C:cytosol"/>
    <property type="evidence" value="ECO:0007669"/>
    <property type="project" value="TreeGrafter"/>
</dbReference>
<dbReference type="GO" id="GO:0008661">
    <property type="term" value="F:1-deoxy-D-xylulose-5-phosphate synthase activity"/>
    <property type="evidence" value="ECO:0007669"/>
    <property type="project" value="UniProtKB-UniRule"/>
</dbReference>
<dbReference type="GO" id="GO:0000287">
    <property type="term" value="F:magnesium ion binding"/>
    <property type="evidence" value="ECO:0007669"/>
    <property type="project" value="UniProtKB-UniRule"/>
</dbReference>
<dbReference type="GO" id="GO:0030976">
    <property type="term" value="F:thiamine pyrophosphate binding"/>
    <property type="evidence" value="ECO:0007669"/>
    <property type="project" value="UniProtKB-UniRule"/>
</dbReference>
<dbReference type="GO" id="GO:0052865">
    <property type="term" value="P:1-deoxy-D-xylulose 5-phosphate biosynthetic process"/>
    <property type="evidence" value="ECO:0007669"/>
    <property type="project" value="UniProtKB-UniPathway"/>
</dbReference>
<dbReference type="GO" id="GO:0019288">
    <property type="term" value="P:isopentenyl diphosphate biosynthetic process, methylerythritol 4-phosphate pathway"/>
    <property type="evidence" value="ECO:0007669"/>
    <property type="project" value="TreeGrafter"/>
</dbReference>
<dbReference type="GO" id="GO:0016114">
    <property type="term" value="P:terpenoid biosynthetic process"/>
    <property type="evidence" value="ECO:0007669"/>
    <property type="project" value="UniProtKB-UniRule"/>
</dbReference>
<dbReference type="GO" id="GO:0009228">
    <property type="term" value="P:thiamine biosynthetic process"/>
    <property type="evidence" value="ECO:0007669"/>
    <property type="project" value="UniProtKB-UniRule"/>
</dbReference>
<dbReference type="CDD" id="cd02007">
    <property type="entry name" value="TPP_DXS"/>
    <property type="match status" value="1"/>
</dbReference>
<dbReference type="CDD" id="cd07033">
    <property type="entry name" value="TPP_PYR_DXS_TK_like"/>
    <property type="match status" value="1"/>
</dbReference>
<dbReference type="FunFam" id="3.40.50.920:FF:000002">
    <property type="entry name" value="1-deoxy-D-xylulose-5-phosphate synthase"/>
    <property type="match status" value="1"/>
</dbReference>
<dbReference type="FunFam" id="3.40.50.970:FF:000005">
    <property type="entry name" value="1-deoxy-D-xylulose-5-phosphate synthase"/>
    <property type="match status" value="1"/>
</dbReference>
<dbReference type="Gene3D" id="3.40.50.920">
    <property type="match status" value="1"/>
</dbReference>
<dbReference type="Gene3D" id="3.40.50.970">
    <property type="match status" value="2"/>
</dbReference>
<dbReference type="HAMAP" id="MF_00315">
    <property type="entry name" value="DXP_synth"/>
    <property type="match status" value="1"/>
</dbReference>
<dbReference type="InterPro" id="IPR005477">
    <property type="entry name" value="Dxylulose-5-P_synthase"/>
</dbReference>
<dbReference type="InterPro" id="IPR029061">
    <property type="entry name" value="THDP-binding"/>
</dbReference>
<dbReference type="InterPro" id="IPR009014">
    <property type="entry name" value="Transketo_C/PFOR_II"/>
</dbReference>
<dbReference type="InterPro" id="IPR005475">
    <property type="entry name" value="Transketolase-like_Pyr-bd"/>
</dbReference>
<dbReference type="InterPro" id="IPR020826">
    <property type="entry name" value="Transketolase_BS"/>
</dbReference>
<dbReference type="InterPro" id="IPR033248">
    <property type="entry name" value="Transketolase_C"/>
</dbReference>
<dbReference type="InterPro" id="IPR049557">
    <property type="entry name" value="Transketolase_CS"/>
</dbReference>
<dbReference type="NCBIfam" id="TIGR00204">
    <property type="entry name" value="dxs"/>
    <property type="match status" value="1"/>
</dbReference>
<dbReference type="NCBIfam" id="NF003933">
    <property type="entry name" value="PRK05444.2-2"/>
    <property type="match status" value="1"/>
</dbReference>
<dbReference type="PANTHER" id="PTHR43322">
    <property type="entry name" value="1-D-DEOXYXYLULOSE 5-PHOSPHATE SYNTHASE-RELATED"/>
    <property type="match status" value="1"/>
</dbReference>
<dbReference type="PANTHER" id="PTHR43322:SF5">
    <property type="entry name" value="1-DEOXY-D-XYLULOSE-5-PHOSPHATE SYNTHASE, CHLOROPLASTIC"/>
    <property type="match status" value="1"/>
</dbReference>
<dbReference type="Pfam" id="PF13292">
    <property type="entry name" value="DXP_synthase_N"/>
    <property type="match status" value="1"/>
</dbReference>
<dbReference type="Pfam" id="PF02779">
    <property type="entry name" value="Transket_pyr"/>
    <property type="match status" value="1"/>
</dbReference>
<dbReference type="Pfam" id="PF02780">
    <property type="entry name" value="Transketolase_C"/>
    <property type="match status" value="1"/>
</dbReference>
<dbReference type="SMART" id="SM00861">
    <property type="entry name" value="Transket_pyr"/>
    <property type="match status" value="1"/>
</dbReference>
<dbReference type="SUPFAM" id="SSF52518">
    <property type="entry name" value="Thiamin diphosphate-binding fold (THDP-binding)"/>
    <property type="match status" value="2"/>
</dbReference>
<dbReference type="SUPFAM" id="SSF52922">
    <property type="entry name" value="TK C-terminal domain-like"/>
    <property type="match status" value="1"/>
</dbReference>
<dbReference type="PROSITE" id="PS00801">
    <property type="entry name" value="TRANSKETOLASE_1"/>
    <property type="match status" value="1"/>
</dbReference>
<dbReference type="PROSITE" id="PS00802">
    <property type="entry name" value="TRANSKETOLASE_2"/>
    <property type="match status" value="1"/>
</dbReference>
<gene>
    <name evidence="1" type="primary">dxs</name>
</gene>
<keyword id="KW-0414">Isoprene biosynthesis</keyword>
<keyword id="KW-0460">Magnesium</keyword>
<keyword id="KW-0479">Metal-binding</keyword>
<keyword id="KW-0784">Thiamine biosynthesis</keyword>
<keyword id="KW-0786">Thiamine pyrophosphate</keyword>
<keyword id="KW-0808">Transferase</keyword>
<evidence type="ECO:0000255" key="1">
    <source>
        <dbReference type="HAMAP-Rule" id="MF_00315"/>
    </source>
</evidence>
<sequence>MTILENIRQPRDLKALPEEQLHELSEEIRQFLVHAVTRTGGHLGPNLGVVELTIALHRVFESPVDRILWDTGHQSYVHKLLTGRQDFSKLRGKGGLSGYPSREESEHDVIENSHASTALGWADGLAKARRVQGEKGHVVAVIGGRALTGGMAWEALNNIAAAKDQPLIIVVNDNERSYAPTIGGLANHLATLRTTDGYEKVLAWGKDVLLRTPIVGHPLYEALHGAKKGFKDAFAPQGMFEDLGLKYVGPIDGHDIGAVESALRRAKRFHGPVLVHCLTVKGRGYEPALAHEEDHFHTVGVMDPLTCEPLSPTDGPSWTSVFGDEIVRIGAEREDIVAITAAMLHPVGLARFADRFPDRVWDVGIAEQHAAVSAAGLATGGLHPVVAVYATFLNRAFDQLLMDVALHRCGVTFVLDRAGVTGVDGASHNGMWDMSVLQVVPGLRIAAPRDADHVRAQLREAVAVDDAPTLIRFPKESVGPRIPALDRVGGLDVLHRDERPEVLLVAVGVMAQVCLQTAELLRARGIGCTVVDPRWVKPVDPVLPPLAAEHRLVAVVEDNSRAAGVGSAVALALGDADVDVPVRRFGIPEQFLAHARRGEVLADIGLTPVEIAGRIGASLPVREEPAEEQPA</sequence>
<protein>
    <recommendedName>
        <fullName evidence="1">1-deoxy-D-xylulose-5-phosphate synthase</fullName>
        <ecNumber evidence="1">2.2.1.7</ecNumber>
    </recommendedName>
    <alternativeName>
        <fullName evidence="1">1-deoxyxylulose-5-phosphate synthase</fullName>
        <shortName evidence="1">DXP synthase</shortName>
        <shortName evidence="1">DXPS</shortName>
    </alternativeName>
</protein>
<feature type="chain" id="PRO_0000189156" description="1-deoxy-D-xylulose-5-phosphate synthase">
    <location>
        <begin position="1"/>
        <end position="631"/>
    </location>
</feature>
<feature type="binding site" evidence="1">
    <location>
        <position position="73"/>
    </location>
    <ligand>
        <name>thiamine diphosphate</name>
        <dbReference type="ChEBI" id="CHEBI:58937"/>
    </ligand>
</feature>
<feature type="binding site" evidence="1">
    <location>
        <begin position="113"/>
        <end position="115"/>
    </location>
    <ligand>
        <name>thiamine diphosphate</name>
        <dbReference type="ChEBI" id="CHEBI:58937"/>
    </ligand>
</feature>
<feature type="binding site" evidence="1">
    <location>
        <position position="174"/>
    </location>
    <ligand>
        <name>Mg(2+)</name>
        <dbReference type="ChEBI" id="CHEBI:18420"/>
    </ligand>
</feature>
<feature type="binding site" evidence="1">
    <location>
        <position position="174"/>
    </location>
    <ligand>
        <name>thiamine diphosphate</name>
        <dbReference type="ChEBI" id="CHEBI:58937"/>
    </ligand>
</feature>
<feature type="binding site" evidence="1">
    <location>
        <position position="285"/>
    </location>
    <ligand>
        <name>thiamine diphosphate</name>
        <dbReference type="ChEBI" id="CHEBI:58937"/>
    </ligand>
</feature>
<feature type="binding site" evidence="1">
    <location>
        <position position="367"/>
    </location>
    <ligand>
        <name>thiamine diphosphate</name>
        <dbReference type="ChEBI" id="CHEBI:58937"/>
    </ligand>
</feature>
<proteinExistence type="evidence at protein level"/>